<sequence>MERAEKREFVTELNEVFKASGSVVVAHYAGSTVAQMNDFRSKMRAAGGTVKVAKNRLAKIALQGTEAEGMSNLFKGQTLIAYSNDPITAPKVVMDFAKTNDKIVVLGGAMGTTTLNAEAVKSLATLPSLDELRAKLLGMIQTPATRIVGVVAAPASQLARVFAAYAKKDEAA</sequence>
<dbReference type="EMBL" id="CP001074">
    <property type="protein sequence ID" value="ACE90709.1"/>
    <property type="molecule type" value="Genomic_DNA"/>
</dbReference>
<dbReference type="SMR" id="B3PW57"/>
<dbReference type="KEGG" id="rec:RHECIAT_CH0001739"/>
<dbReference type="eggNOG" id="COG0244">
    <property type="taxonomic scope" value="Bacteria"/>
</dbReference>
<dbReference type="HOGENOM" id="CLU_092227_0_0_5"/>
<dbReference type="Proteomes" id="UP000008817">
    <property type="component" value="Chromosome"/>
</dbReference>
<dbReference type="GO" id="GO:1990904">
    <property type="term" value="C:ribonucleoprotein complex"/>
    <property type="evidence" value="ECO:0007669"/>
    <property type="project" value="UniProtKB-KW"/>
</dbReference>
<dbReference type="GO" id="GO:0005840">
    <property type="term" value="C:ribosome"/>
    <property type="evidence" value="ECO:0007669"/>
    <property type="project" value="UniProtKB-KW"/>
</dbReference>
<dbReference type="GO" id="GO:0070180">
    <property type="term" value="F:large ribosomal subunit rRNA binding"/>
    <property type="evidence" value="ECO:0007669"/>
    <property type="project" value="UniProtKB-UniRule"/>
</dbReference>
<dbReference type="GO" id="GO:0006412">
    <property type="term" value="P:translation"/>
    <property type="evidence" value="ECO:0007669"/>
    <property type="project" value="UniProtKB-UniRule"/>
</dbReference>
<dbReference type="CDD" id="cd05797">
    <property type="entry name" value="Ribosomal_L10"/>
    <property type="match status" value="1"/>
</dbReference>
<dbReference type="Gene3D" id="3.30.70.1730">
    <property type="match status" value="1"/>
</dbReference>
<dbReference type="Gene3D" id="6.10.250.290">
    <property type="match status" value="1"/>
</dbReference>
<dbReference type="HAMAP" id="MF_00362">
    <property type="entry name" value="Ribosomal_uL10"/>
    <property type="match status" value="1"/>
</dbReference>
<dbReference type="InterPro" id="IPR001790">
    <property type="entry name" value="Ribosomal_uL10"/>
</dbReference>
<dbReference type="InterPro" id="IPR043141">
    <property type="entry name" value="Ribosomal_uL10-like_sf"/>
</dbReference>
<dbReference type="InterPro" id="IPR022973">
    <property type="entry name" value="Ribosomal_uL10_bac"/>
</dbReference>
<dbReference type="InterPro" id="IPR047865">
    <property type="entry name" value="Ribosomal_uL10_bac_type"/>
</dbReference>
<dbReference type="NCBIfam" id="NF000955">
    <property type="entry name" value="PRK00099.1-1"/>
    <property type="match status" value="1"/>
</dbReference>
<dbReference type="PANTHER" id="PTHR11560">
    <property type="entry name" value="39S RIBOSOMAL PROTEIN L10, MITOCHONDRIAL"/>
    <property type="match status" value="1"/>
</dbReference>
<dbReference type="Pfam" id="PF00466">
    <property type="entry name" value="Ribosomal_L10"/>
    <property type="match status" value="1"/>
</dbReference>
<dbReference type="SUPFAM" id="SSF160369">
    <property type="entry name" value="Ribosomal protein L10-like"/>
    <property type="match status" value="1"/>
</dbReference>
<name>RL10_RHIE6</name>
<protein>
    <recommendedName>
        <fullName evidence="1">Large ribosomal subunit protein uL10</fullName>
    </recommendedName>
    <alternativeName>
        <fullName evidence="2">50S ribosomal protein L10</fullName>
    </alternativeName>
</protein>
<accession>B3PW57</accession>
<proteinExistence type="inferred from homology"/>
<evidence type="ECO:0000255" key="1">
    <source>
        <dbReference type="HAMAP-Rule" id="MF_00362"/>
    </source>
</evidence>
<evidence type="ECO:0000305" key="2"/>
<comment type="function">
    <text evidence="1">Forms part of the ribosomal stalk, playing a central role in the interaction of the ribosome with GTP-bound translation factors.</text>
</comment>
<comment type="subunit">
    <text evidence="1">Part of the ribosomal stalk of the 50S ribosomal subunit. The N-terminus interacts with L11 and the large rRNA to form the base of the stalk. The C-terminus forms an elongated spine to which L12 dimers bind in a sequential fashion forming a multimeric L10(L12)X complex.</text>
</comment>
<comment type="similarity">
    <text evidence="1">Belongs to the universal ribosomal protein uL10 family.</text>
</comment>
<reference key="1">
    <citation type="journal article" date="2010" name="Appl. Environ. Microbiol.">
        <title>Conserved symbiotic plasmid DNA sequences in the multireplicon pangenomic structure of Rhizobium etli.</title>
        <authorList>
            <person name="Gonzalez V."/>
            <person name="Acosta J.L."/>
            <person name="Santamaria R.I."/>
            <person name="Bustos P."/>
            <person name="Fernandez J.L."/>
            <person name="Hernandez Gonzalez I.L."/>
            <person name="Diaz R."/>
            <person name="Flores M."/>
            <person name="Palacios R."/>
            <person name="Mora J."/>
            <person name="Davila G."/>
        </authorList>
    </citation>
    <scope>NUCLEOTIDE SEQUENCE [LARGE SCALE GENOMIC DNA]</scope>
    <source>
        <strain>CIAT 652</strain>
    </source>
</reference>
<feature type="chain" id="PRO_1000121002" description="Large ribosomal subunit protein uL10">
    <location>
        <begin position="1"/>
        <end position="172"/>
    </location>
</feature>
<keyword id="KW-0687">Ribonucleoprotein</keyword>
<keyword id="KW-0689">Ribosomal protein</keyword>
<keyword id="KW-0694">RNA-binding</keyword>
<keyword id="KW-0699">rRNA-binding</keyword>
<gene>
    <name evidence="1" type="primary">rplJ</name>
    <name type="ordered locus">RHECIAT_CH0001739</name>
</gene>
<organism>
    <name type="scientific">Rhizobium etli (strain CIAT 652)</name>
    <dbReference type="NCBI Taxonomy" id="491916"/>
    <lineage>
        <taxon>Bacteria</taxon>
        <taxon>Pseudomonadati</taxon>
        <taxon>Pseudomonadota</taxon>
        <taxon>Alphaproteobacteria</taxon>
        <taxon>Hyphomicrobiales</taxon>
        <taxon>Rhizobiaceae</taxon>
        <taxon>Rhizobium/Agrobacterium group</taxon>
        <taxon>Rhizobium</taxon>
    </lineage>
</organism>